<reference key="1">
    <citation type="submission" date="1999-08" db="EMBL/GenBank/DDBJ databases">
        <authorList>
            <person name="Lee H.J."/>
            <person name="Kang H.S."/>
        </authorList>
    </citation>
    <scope>NUCLEOTIDE SEQUENCE [GENOMIC DNA]</scope>
    <source>
        <strain>ATCC 31821 / ZM4 / CP4</strain>
    </source>
</reference>
<reference key="2">
    <citation type="journal article" date="2005" name="Nat. Biotechnol.">
        <title>The genome sequence of the ethanologenic bacterium Zymomonas mobilis ZM4.</title>
        <authorList>
            <person name="Seo J.-S."/>
            <person name="Chong H."/>
            <person name="Park H.S."/>
            <person name="Yoon K.-O."/>
            <person name="Jung C."/>
            <person name="Kim J.J."/>
            <person name="Hong J.H."/>
            <person name="Kim H."/>
            <person name="Kim J.-H."/>
            <person name="Kil J.-I."/>
            <person name="Park C.J."/>
            <person name="Oh H.-M."/>
            <person name="Lee J.-S."/>
            <person name="Jin S.-J."/>
            <person name="Um H.-W."/>
            <person name="Lee H.-J."/>
            <person name="Oh S.-J."/>
            <person name="Kim J.Y."/>
            <person name="Kang H.L."/>
            <person name="Lee S.Y."/>
            <person name="Lee K.J."/>
            <person name="Kang H.S."/>
        </authorList>
    </citation>
    <scope>NUCLEOTIDE SEQUENCE [LARGE SCALE GENOMIC DNA]</scope>
    <source>
        <strain>ATCC 31821 / ZM4 / CP4</strain>
    </source>
</reference>
<organism>
    <name type="scientific">Zymomonas mobilis subsp. mobilis (strain ATCC 31821 / ZM4 / CP4)</name>
    <dbReference type="NCBI Taxonomy" id="264203"/>
    <lineage>
        <taxon>Bacteria</taxon>
        <taxon>Pseudomonadati</taxon>
        <taxon>Pseudomonadota</taxon>
        <taxon>Alphaproteobacteria</taxon>
        <taxon>Sphingomonadales</taxon>
        <taxon>Zymomonadaceae</taxon>
        <taxon>Zymomonas</taxon>
    </lineage>
</organism>
<feature type="chain" id="PRO_0000102388" description="Lipoyl synthase">
    <location>
        <begin position="1"/>
        <end position="323"/>
    </location>
</feature>
<feature type="domain" description="Radical SAM core" evidence="2">
    <location>
        <begin position="65"/>
        <end position="282"/>
    </location>
</feature>
<feature type="binding site" evidence="1">
    <location>
        <position position="53"/>
    </location>
    <ligand>
        <name>[4Fe-4S] cluster</name>
        <dbReference type="ChEBI" id="CHEBI:49883"/>
        <label>1</label>
    </ligand>
</feature>
<feature type="binding site" evidence="1">
    <location>
        <position position="58"/>
    </location>
    <ligand>
        <name>[4Fe-4S] cluster</name>
        <dbReference type="ChEBI" id="CHEBI:49883"/>
        <label>1</label>
    </ligand>
</feature>
<feature type="binding site" evidence="1">
    <location>
        <position position="64"/>
    </location>
    <ligand>
        <name>[4Fe-4S] cluster</name>
        <dbReference type="ChEBI" id="CHEBI:49883"/>
        <label>1</label>
    </ligand>
</feature>
<feature type="binding site" evidence="1">
    <location>
        <position position="79"/>
    </location>
    <ligand>
        <name>[4Fe-4S] cluster</name>
        <dbReference type="ChEBI" id="CHEBI:49883"/>
        <label>2</label>
        <note>4Fe-4S-S-AdoMet</note>
    </ligand>
</feature>
<feature type="binding site" evidence="1">
    <location>
        <position position="83"/>
    </location>
    <ligand>
        <name>[4Fe-4S] cluster</name>
        <dbReference type="ChEBI" id="CHEBI:49883"/>
        <label>2</label>
        <note>4Fe-4S-S-AdoMet</note>
    </ligand>
</feature>
<feature type="binding site" evidence="1">
    <location>
        <position position="86"/>
    </location>
    <ligand>
        <name>[4Fe-4S] cluster</name>
        <dbReference type="ChEBI" id="CHEBI:49883"/>
        <label>2</label>
        <note>4Fe-4S-S-AdoMet</note>
    </ligand>
</feature>
<feature type="binding site" evidence="1">
    <location>
        <position position="293"/>
    </location>
    <ligand>
        <name>[4Fe-4S] cluster</name>
        <dbReference type="ChEBI" id="CHEBI:49883"/>
        <label>1</label>
    </ligand>
</feature>
<feature type="sequence conflict" description="In Ref. 1; AAD53901." evidence="3" ref="1">
    <original>P</original>
    <variation>T</variation>
    <location>
        <position position="59"/>
    </location>
</feature>
<name>LIPA_ZYMMO</name>
<accession>Q9RNY7</accession>
<accession>Q5NNF4</accession>
<dbReference type="EC" id="2.8.1.8" evidence="1"/>
<dbReference type="EMBL" id="AF176314">
    <property type="protein sequence ID" value="AAD53901.1"/>
    <property type="molecule type" value="Genomic_DNA"/>
</dbReference>
<dbReference type="EMBL" id="AE008692">
    <property type="protein sequence ID" value="AAV89756.1"/>
    <property type="molecule type" value="Genomic_DNA"/>
</dbReference>
<dbReference type="RefSeq" id="WP_011240959.1">
    <property type="nucleotide sequence ID" value="NZ_CP035711.1"/>
</dbReference>
<dbReference type="SMR" id="Q9RNY7"/>
<dbReference type="STRING" id="264203.ZMO1132"/>
<dbReference type="KEGG" id="zmo:ZMO1132"/>
<dbReference type="eggNOG" id="COG0320">
    <property type="taxonomic scope" value="Bacteria"/>
</dbReference>
<dbReference type="HOGENOM" id="CLU_033144_2_1_5"/>
<dbReference type="UniPathway" id="UPA00538">
    <property type="reaction ID" value="UER00593"/>
</dbReference>
<dbReference type="Proteomes" id="UP000001173">
    <property type="component" value="Chromosome"/>
</dbReference>
<dbReference type="GO" id="GO:0005737">
    <property type="term" value="C:cytoplasm"/>
    <property type="evidence" value="ECO:0007669"/>
    <property type="project" value="UniProtKB-SubCell"/>
</dbReference>
<dbReference type="GO" id="GO:0051539">
    <property type="term" value="F:4 iron, 4 sulfur cluster binding"/>
    <property type="evidence" value="ECO:0007669"/>
    <property type="project" value="UniProtKB-UniRule"/>
</dbReference>
<dbReference type="GO" id="GO:0016992">
    <property type="term" value="F:lipoate synthase activity"/>
    <property type="evidence" value="ECO:0007669"/>
    <property type="project" value="UniProtKB-UniRule"/>
</dbReference>
<dbReference type="GO" id="GO:0046872">
    <property type="term" value="F:metal ion binding"/>
    <property type="evidence" value="ECO:0007669"/>
    <property type="project" value="UniProtKB-KW"/>
</dbReference>
<dbReference type="CDD" id="cd01335">
    <property type="entry name" value="Radical_SAM"/>
    <property type="match status" value="1"/>
</dbReference>
<dbReference type="FunFam" id="3.20.20.70:FF:000040">
    <property type="entry name" value="Lipoyl synthase"/>
    <property type="match status" value="1"/>
</dbReference>
<dbReference type="Gene3D" id="3.20.20.70">
    <property type="entry name" value="Aldolase class I"/>
    <property type="match status" value="1"/>
</dbReference>
<dbReference type="HAMAP" id="MF_00206">
    <property type="entry name" value="Lipoyl_synth"/>
    <property type="match status" value="1"/>
</dbReference>
<dbReference type="InterPro" id="IPR013785">
    <property type="entry name" value="Aldolase_TIM"/>
</dbReference>
<dbReference type="InterPro" id="IPR006638">
    <property type="entry name" value="Elp3/MiaA/NifB-like_rSAM"/>
</dbReference>
<dbReference type="InterPro" id="IPR031691">
    <property type="entry name" value="LIAS_N"/>
</dbReference>
<dbReference type="InterPro" id="IPR003698">
    <property type="entry name" value="Lipoyl_synth"/>
</dbReference>
<dbReference type="InterPro" id="IPR007197">
    <property type="entry name" value="rSAM"/>
</dbReference>
<dbReference type="NCBIfam" id="TIGR00510">
    <property type="entry name" value="lipA"/>
    <property type="match status" value="1"/>
</dbReference>
<dbReference type="NCBIfam" id="NF004019">
    <property type="entry name" value="PRK05481.1"/>
    <property type="match status" value="1"/>
</dbReference>
<dbReference type="NCBIfam" id="NF009544">
    <property type="entry name" value="PRK12928.1"/>
    <property type="match status" value="1"/>
</dbReference>
<dbReference type="PANTHER" id="PTHR10949">
    <property type="entry name" value="LIPOYL SYNTHASE"/>
    <property type="match status" value="1"/>
</dbReference>
<dbReference type="PANTHER" id="PTHR10949:SF0">
    <property type="entry name" value="LIPOYL SYNTHASE, MITOCHONDRIAL"/>
    <property type="match status" value="1"/>
</dbReference>
<dbReference type="Pfam" id="PF16881">
    <property type="entry name" value="LIAS_N"/>
    <property type="match status" value="1"/>
</dbReference>
<dbReference type="Pfam" id="PF04055">
    <property type="entry name" value="Radical_SAM"/>
    <property type="match status" value="1"/>
</dbReference>
<dbReference type="PIRSF" id="PIRSF005963">
    <property type="entry name" value="Lipoyl_synth"/>
    <property type="match status" value="1"/>
</dbReference>
<dbReference type="SFLD" id="SFLDF00271">
    <property type="entry name" value="lipoyl_synthase"/>
    <property type="match status" value="1"/>
</dbReference>
<dbReference type="SFLD" id="SFLDS00029">
    <property type="entry name" value="Radical_SAM"/>
    <property type="match status" value="1"/>
</dbReference>
<dbReference type="SMART" id="SM00729">
    <property type="entry name" value="Elp3"/>
    <property type="match status" value="1"/>
</dbReference>
<dbReference type="SUPFAM" id="SSF102114">
    <property type="entry name" value="Radical SAM enzymes"/>
    <property type="match status" value="1"/>
</dbReference>
<dbReference type="PROSITE" id="PS51918">
    <property type="entry name" value="RADICAL_SAM"/>
    <property type="match status" value="1"/>
</dbReference>
<comment type="function">
    <text evidence="1">Catalyzes the radical-mediated insertion of two sulfur atoms into the C-6 and C-8 positions of the octanoyl moiety bound to the lipoyl domains of lipoate-dependent enzymes, thereby converting the octanoylated domains into lipoylated derivatives.</text>
</comment>
<comment type="catalytic activity">
    <reaction evidence="1">
        <text>[[Fe-S] cluster scaffold protein carrying a second [4Fe-4S](2+) cluster] + N(6)-octanoyl-L-lysyl-[protein] + 2 oxidized [2Fe-2S]-[ferredoxin] + 2 S-adenosyl-L-methionine + 4 H(+) = [[Fe-S] cluster scaffold protein] + N(6)-[(R)-dihydrolipoyl]-L-lysyl-[protein] + 4 Fe(3+) + 2 hydrogen sulfide + 2 5'-deoxyadenosine + 2 L-methionine + 2 reduced [2Fe-2S]-[ferredoxin]</text>
        <dbReference type="Rhea" id="RHEA:16585"/>
        <dbReference type="Rhea" id="RHEA-COMP:9928"/>
        <dbReference type="Rhea" id="RHEA-COMP:10000"/>
        <dbReference type="Rhea" id="RHEA-COMP:10001"/>
        <dbReference type="Rhea" id="RHEA-COMP:10475"/>
        <dbReference type="Rhea" id="RHEA-COMP:14568"/>
        <dbReference type="Rhea" id="RHEA-COMP:14569"/>
        <dbReference type="ChEBI" id="CHEBI:15378"/>
        <dbReference type="ChEBI" id="CHEBI:17319"/>
        <dbReference type="ChEBI" id="CHEBI:29034"/>
        <dbReference type="ChEBI" id="CHEBI:29919"/>
        <dbReference type="ChEBI" id="CHEBI:33722"/>
        <dbReference type="ChEBI" id="CHEBI:33737"/>
        <dbReference type="ChEBI" id="CHEBI:33738"/>
        <dbReference type="ChEBI" id="CHEBI:57844"/>
        <dbReference type="ChEBI" id="CHEBI:59789"/>
        <dbReference type="ChEBI" id="CHEBI:78809"/>
        <dbReference type="ChEBI" id="CHEBI:83100"/>
        <dbReference type="EC" id="2.8.1.8"/>
    </reaction>
</comment>
<comment type="cofactor">
    <cofactor evidence="1">
        <name>[4Fe-4S] cluster</name>
        <dbReference type="ChEBI" id="CHEBI:49883"/>
    </cofactor>
    <text evidence="1">Binds 2 [4Fe-4S] clusters per subunit. One cluster is coordinated with 3 cysteines and an exchangeable S-adenosyl-L-methionine.</text>
</comment>
<comment type="pathway">
    <text evidence="1">Protein modification; protein lipoylation via endogenous pathway; protein N(6)-(lipoyl)lysine from octanoyl-[acyl-carrier-protein]: step 2/2.</text>
</comment>
<comment type="subcellular location">
    <subcellularLocation>
        <location evidence="1">Cytoplasm</location>
    </subcellularLocation>
</comment>
<comment type="similarity">
    <text evidence="1">Belongs to the radical SAM superfamily. Lipoyl synthase family.</text>
</comment>
<proteinExistence type="inferred from homology"/>
<evidence type="ECO:0000255" key="1">
    <source>
        <dbReference type="HAMAP-Rule" id="MF_00206"/>
    </source>
</evidence>
<evidence type="ECO:0000255" key="2">
    <source>
        <dbReference type="PROSITE-ProRule" id="PRU01266"/>
    </source>
</evidence>
<evidence type="ECO:0000305" key="3"/>
<protein>
    <recommendedName>
        <fullName evidence="1">Lipoyl synthase</fullName>
        <ecNumber evidence="1">2.8.1.8</ecNumber>
    </recommendedName>
    <alternativeName>
        <fullName evidence="1">Lip-syn</fullName>
        <shortName evidence="1">LS</shortName>
    </alternativeName>
    <alternativeName>
        <fullName evidence="1">Lipoate synthase</fullName>
    </alternativeName>
    <alternativeName>
        <fullName evidence="1">Lipoic acid synthase</fullName>
    </alternativeName>
    <alternativeName>
        <fullName evidence="1">Sulfur insertion protein LipA</fullName>
    </alternativeName>
</protein>
<gene>
    <name evidence="1" type="primary">lipA</name>
    <name type="ordered locus">ZMO1132</name>
</gene>
<keyword id="KW-0004">4Fe-4S</keyword>
<keyword id="KW-0963">Cytoplasm</keyword>
<keyword id="KW-0408">Iron</keyword>
<keyword id="KW-0411">Iron-sulfur</keyword>
<keyword id="KW-0479">Metal-binding</keyword>
<keyword id="KW-1185">Reference proteome</keyword>
<keyword id="KW-0949">S-adenosyl-L-methionine</keyword>
<keyword id="KW-0808">Transferase</keyword>
<sequence length="323" mass="35662">MSKIPAPDEKTSRSDSGSSILRKPDWLRVRSPGGAAFNETHGLIRKLGLATVCEEAACPNIGECWTKKQATVMILGEVCTRACAFCNVKTGHPDKVNPLEPGHVADVAAEMNLEHIVITSVDRDDLEDGGASQFVKVIEAVRARTPKTTIEILTPDFRGKPDHALDMIVKARPDVFNHNLETVPRLYPTIRPGARYFTSLRLLEKVRERDPSIFTKSGLMLGLGEDRLEVHQVMDDMRQADVDFLTLGQYLQPTPRHVRVEEFVTPDSFKAYAATARAKGFSMVASSPLTRSSYYAGADFARLKEARQKKLEKIAAKNSGKGA</sequence>